<gene>
    <name evidence="1" type="primary">gltX</name>
    <name type="ordered locus">Bcer98_0082</name>
</gene>
<organism>
    <name type="scientific">Bacillus cytotoxicus (strain DSM 22905 / CIP 110041 / 391-98 / NVH 391-98)</name>
    <dbReference type="NCBI Taxonomy" id="315749"/>
    <lineage>
        <taxon>Bacteria</taxon>
        <taxon>Bacillati</taxon>
        <taxon>Bacillota</taxon>
        <taxon>Bacilli</taxon>
        <taxon>Bacillales</taxon>
        <taxon>Bacillaceae</taxon>
        <taxon>Bacillus</taxon>
        <taxon>Bacillus cereus group</taxon>
    </lineage>
</organism>
<comment type="function">
    <text evidence="1">Catalyzes the attachment of glutamate to tRNA(Glu) in a two-step reaction: glutamate is first activated by ATP to form Glu-AMP and then transferred to the acceptor end of tRNA(Glu).</text>
</comment>
<comment type="catalytic activity">
    <reaction evidence="1">
        <text>tRNA(Glu) + L-glutamate + ATP = L-glutamyl-tRNA(Glu) + AMP + diphosphate</text>
        <dbReference type="Rhea" id="RHEA:23540"/>
        <dbReference type="Rhea" id="RHEA-COMP:9663"/>
        <dbReference type="Rhea" id="RHEA-COMP:9680"/>
        <dbReference type="ChEBI" id="CHEBI:29985"/>
        <dbReference type="ChEBI" id="CHEBI:30616"/>
        <dbReference type="ChEBI" id="CHEBI:33019"/>
        <dbReference type="ChEBI" id="CHEBI:78442"/>
        <dbReference type="ChEBI" id="CHEBI:78520"/>
        <dbReference type="ChEBI" id="CHEBI:456215"/>
        <dbReference type="EC" id="6.1.1.17"/>
    </reaction>
</comment>
<comment type="subunit">
    <text evidence="1">Monomer.</text>
</comment>
<comment type="subcellular location">
    <subcellularLocation>
        <location evidence="1">Cytoplasm</location>
    </subcellularLocation>
</comment>
<comment type="similarity">
    <text evidence="1">Belongs to the class-I aminoacyl-tRNA synthetase family. Glutamate--tRNA ligase type 1 subfamily.</text>
</comment>
<accession>A7GJZ9</accession>
<protein>
    <recommendedName>
        <fullName evidence="1">Glutamate--tRNA ligase</fullName>
        <ecNumber evidence="1">6.1.1.17</ecNumber>
    </recommendedName>
    <alternativeName>
        <fullName evidence="1">Glutamyl-tRNA synthetase</fullName>
        <shortName evidence="1">GluRS</shortName>
    </alternativeName>
</protein>
<reference key="1">
    <citation type="journal article" date="2008" name="Chem. Biol. Interact.">
        <title>Extending the Bacillus cereus group genomics to putative food-borne pathogens of different toxicity.</title>
        <authorList>
            <person name="Lapidus A."/>
            <person name="Goltsman E."/>
            <person name="Auger S."/>
            <person name="Galleron N."/>
            <person name="Segurens B."/>
            <person name="Dossat C."/>
            <person name="Land M.L."/>
            <person name="Broussolle V."/>
            <person name="Brillard J."/>
            <person name="Guinebretiere M.-H."/>
            <person name="Sanchis V."/>
            <person name="Nguen-the C."/>
            <person name="Lereclus D."/>
            <person name="Richardson P."/>
            <person name="Wincker P."/>
            <person name="Weissenbach J."/>
            <person name="Ehrlich S.D."/>
            <person name="Sorokin A."/>
        </authorList>
    </citation>
    <scope>NUCLEOTIDE SEQUENCE [LARGE SCALE GENOMIC DNA]</scope>
    <source>
        <strain>DSM 22905 / CIP 110041 / 391-98 / NVH 391-98</strain>
    </source>
</reference>
<evidence type="ECO:0000255" key="1">
    <source>
        <dbReference type="HAMAP-Rule" id="MF_00022"/>
    </source>
</evidence>
<name>SYE_BACCN</name>
<dbReference type="EC" id="6.1.1.17" evidence="1"/>
<dbReference type="EMBL" id="CP000764">
    <property type="protein sequence ID" value="ABS20457.1"/>
    <property type="molecule type" value="Genomic_DNA"/>
</dbReference>
<dbReference type="RefSeq" id="WP_011983226.1">
    <property type="nucleotide sequence ID" value="NC_009674.1"/>
</dbReference>
<dbReference type="SMR" id="A7GJZ9"/>
<dbReference type="STRING" id="315749.Bcer98_0082"/>
<dbReference type="GeneID" id="33895403"/>
<dbReference type="KEGG" id="bcy:Bcer98_0082"/>
<dbReference type="eggNOG" id="COG0008">
    <property type="taxonomic scope" value="Bacteria"/>
</dbReference>
<dbReference type="HOGENOM" id="CLU_015768_6_1_9"/>
<dbReference type="OrthoDB" id="9807503at2"/>
<dbReference type="Proteomes" id="UP000002300">
    <property type="component" value="Chromosome"/>
</dbReference>
<dbReference type="GO" id="GO:0005829">
    <property type="term" value="C:cytosol"/>
    <property type="evidence" value="ECO:0007669"/>
    <property type="project" value="TreeGrafter"/>
</dbReference>
<dbReference type="GO" id="GO:0005524">
    <property type="term" value="F:ATP binding"/>
    <property type="evidence" value="ECO:0007669"/>
    <property type="project" value="UniProtKB-UniRule"/>
</dbReference>
<dbReference type="GO" id="GO:0004818">
    <property type="term" value="F:glutamate-tRNA ligase activity"/>
    <property type="evidence" value="ECO:0007669"/>
    <property type="project" value="UniProtKB-UniRule"/>
</dbReference>
<dbReference type="GO" id="GO:0000049">
    <property type="term" value="F:tRNA binding"/>
    <property type="evidence" value="ECO:0007669"/>
    <property type="project" value="InterPro"/>
</dbReference>
<dbReference type="GO" id="GO:0008270">
    <property type="term" value="F:zinc ion binding"/>
    <property type="evidence" value="ECO:0007669"/>
    <property type="project" value="InterPro"/>
</dbReference>
<dbReference type="GO" id="GO:0006424">
    <property type="term" value="P:glutamyl-tRNA aminoacylation"/>
    <property type="evidence" value="ECO:0007669"/>
    <property type="project" value="UniProtKB-UniRule"/>
</dbReference>
<dbReference type="CDD" id="cd00808">
    <property type="entry name" value="GluRS_core"/>
    <property type="match status" value="1"/>
</dbReference>
<dbReference type="FunFam" id="1.10.10.350:FF:000002">
    <property type="entry name" value="Glutamate--tRNA ligase"/>
    <property type="match status" value="1"/>
</dbReference>
<dbReference type="FunFam" id="3.40.50.620:FF:000007">
    <property type="entry name" value="Glutamate--tRNA ligase"/>
    <property type="match status" value="1"/>
</dbReference>
<dbReference type="Gene3D" id="1.10.10.350">
    <property type="match status" value="1"/>
</dbReference>
<dbReference type="Gene3D" id="3.40.50.620">
    <property type="entry name" value="HUPs"/>
    <property type="match status" value="1"/>
</dbReference>
<dbReference type="HAMAP" id="MF_00022">
    <property type="entry name" value="Glu_tRNA_synth_type1"/>
    <property type="match status" value="1"/>
</dbReference>
<dbReference type="InterPro" id="IPR045462">
    <property type="entry name" value="aa-tRNA-synth_I_cd-bd"/>
</dbReference>
<dbReference type="InterPro" id="IPR020751">
    <property type="entry name" value="aa-tRNA-synth_I_codon-bd_sub2"/>
</dbReference>
<dbReference type="InterPro" id="IPR001412">
    <property type="entry name" value="aa-tRNA-synth_I_CS"/>
</dbReference>
<dbReference type="InterPro" id="IPR008925">
    <property type="entry name" value="aa_tRNA-synth_I_cd-bd_sf"/>
</dbReference>
<dbReference type="InterPro" id="IPR004527">
    <property type="entry name" value="Glu-tRNA-ligase_bac/mito"/>
</dbReference>
<dbReference type="InterPro" id="IPR000924">
    <property type="entry name" value="Glu/Gln-tRNA-synth"/>
</dbReference>
<dbReference type="InterPro" id="IPR020058">
    <property type="entry name" value="Glu/Gln-tRNA-synth_Ib_cat-dom"/>
</dbReference>
<dbReference type="InterPro" id="IPR049940">
    <property type="entry name" value="GluQ/Sye"/>
</dbReference>
<dbReference type="InterPro" id="IPR033910">
    <property type="entry name" value="GluRS_core"/>
</dbReference>
<dbReference type="InterPro" id="IPR014729">
    <property type="entry name" value="Rossmann-like_a/b/a_fold"/>
</dbReference>
<dbReference type="NCBIfam" id="TIGR00464">
    <property type="entry name" value="gltX_bact"/>
    <property type="match status" value="1"/>
</dbReference>
<dbReference type="PANTHER" id="PTHR43311">
    <property type="entry name" value="GLUTAMATE--TRNA LIGASE"/>
    <property type="match status" value="1"/>
</dbReference>
<dbReference type="PANTHER" id="PTHR43311:SF2">
    <property type="entry name" value="GLUTAMATE--TRNA LIGASE, MITOCHONDRIAL-RELATED"/>
    <property type="match status" value="1"/>
</dbReference>
<dbReference type="Pfam" id="PF19269">
    <property type="entry name" value="Anticodon_2"/>
    <property type="match status" value="1"/>
</dbReference>
<dbReference type="Pfam" id="PF00749">
    <property type="entry name" value="tRNA-synt_1c"/>
    <property type="match status" value="1"/>
</dbReference>
<dbReference type="PRINTS" id="PR00987">
    <property type="entry name" value="TRNASYNTHGLU"/>
</dbReference>
<dbReference type="SUPFAM" id="SSF48163">
    <property type="entry name" value="An anticodon-binding domain of class I aminoacyl-tRNA synthetases"/>
    <property type="match status" value="1"/>
</dbReference>
<dbReference type="SUPFAM" id="SSF52374">
    <property type="entry name" value="Nucleotidylyl transferase"/>
    <property type="match status" value="1"/>
</dbReference>
<dbReference type="PROSITE" id="PS00178">
    <property type="entry name" value="AA_TRNA_LIGASE_I"/>
    <property type="match status" value="1"/>
</dbReference>
<feature type="chain" id="PRO_1000074316" description="Glutamate--tRNA ligase">
    <location>
        <begin position="1"/>
        <end position="485"/>
    </location>
</feature>
<feature type="short sequence motif" description="'HIGH' region" evidence="1">
    <location>
        <begin position="11"/>
        <end position="21"/>
    </location>
</feature>
<feature type="short sequence motif" description="'KMSKS' region" evidence="1">
    <location>
        <begin position="252"/>
        <end position="256"/>
    </location>
</feature>
<feature type="binding site" evidence="1">
    <location>
        <position position="255"/>
    </location>
    <ligand>
        <name>ATP</name>
        <dbReference type="ChEBI" id="CHEBI:30616"/>
    </ligand>
</feature>
<proteinExistence type="inferred from homology"/>
<keyword id="KW-0030">Aminoacyl-tRNA synthetase</keyword>
<keyword id="KW-0067">ATP-binding</keyword>
<keyword id="KW-0963">Cytoplasm</keyword>
<keyword id="KW-0436">Ligase</keyword>
<keyword id="KW-0547">Nucleotide-binding</keyword>
<keyword id="KW-0648">Protein biosynthesis</keyword>
<sequence>MEKQVRVRYAPSPTGHLHIGNARTALFNYLFARHQDGKFIIRIEDTDVKRNVAGGEESQLKYLKWLGMDWDEGVDVGGKYGPYRQTERLDIYKELYEDLLERGLAYKCYMTEEELEAEREGQIARGETPRYAGNHRNLTEEQIAQFEAEGRVPSIRFRVPDNREYKFNDIVKGDVTFHSNDFGDFVIVKKDGIPTYNFAVAVDDHLMEITHVLRGDDHISNTPKQMMIYEAFGWDTPQFGHMTLIVNESRKKLSKRDESIIQFIEQYEALGYLPEAIFNFIALLGWSPVGEEEIFSKDEFIKMFDAARLSKSPALFDSQKLKWMNNQYMKKQDLDTVVALSLPHLVKAGRVSEDLSEQEAAWVRDVIALYHEQMSYGAEIVELSEMFFKDHVDFEEEGKEVLKGEQVPEVLRAFAVELEALEEVEPATIKKAIKAVQKETGHKGKNLFMPIRVATTGQTHGPELPNAIALLGKEKVLKRIQKVIG</sequence>